<keyword id="KW-0106">Calcium</keyword>
<keyword id="KW-1003">Cell membrane</keyword>
<keyword id="KW-0375">Hydrogen ion transport</keyword>
<keyword id="KW-0406">Ion transport</keyword>
<keyword id="KW-0460">Magnesium</keyword>
<keyword id="KW-0472">Membrane</keyword>
<keyword id="KW-0479">Metal-binding</keyword>
<keyword id="KW-1185">Reference proteome</keyword>
<keyword id="KW-1278">Translocase</keyword>
<keyword id="KW-0812">Transmembrane</keyword>
<keyword id="KW-1133">Transmembrane helix</keyword>
<keyword id="KW-0813">Transport</keyword>
<evidence type="ECO:0000250" key="1"/>
<evidence type="ECO:0000255" key="2">
    <source>
        <dbReference type="HAMAP-Rule" id="MF_01129"/>
    </source>
</evidence>
<sequence>MQDLNAVQSLAVWAVLVISLLGIGYAFFIRSQILAQDTGTPKMREVWGFIKTGANAYLSQQFRTISILIVILTFVLAASVFIIPPTTEAVERFGSKEAATIWVAIGRAVAFLMGSLFSYAVGFVGMNVAVEGNVRVAAAARKGYNPALQVAYKSGSVTGMLTVGLGLLGGTLIFMVFGIAAPDALLGFGFGGSLIALFMRVGGGIYTKAADVGADLVGKVEAGIPEDDPRNAAVIADLVGDNVGDCAGMAADVFESFEVTLVSALILGLVLGDAVVGTIGDGAYDLRFIIFPLVLRAIGVVASVIGNLFVTTDERKRNAMAAMNRGFYIAAGLAIAASAAATPVFMVNEATGEVDWRPFFATLSGVVLAIVLDKLTEYFTSTHFSPVKETSKASQTGSATNILSGLALGMESSVWAILVISASIFTSVLIYAGEPAATQFTAILYGVSLTGIGMLLLTGNTISMDSFGPISDNANGIGEMAGLDKNARNVMDDLDAVGNTTKAVTKGIAIGSAVIAAVALYGSYFTDVNKVLQQMINEGRQGIELLASINVAAPPVFIGLLIGGAVPFLFSALTIRAVSRAAAQIVNEVRRQFRIPGLMEGKVQPDYARAVQISTTAAQKELISLGLIAVMVPIIVGFTLGVEALGGFLAGIILTGQLMAVFQANAGGAWDNAKKYIEEGNFGGKHSEPHKAAVVGDTVGDPLKDTAGPALNPMIKVINLVALIIAPIVVTIEPGSPGVIIAMIICGAALVWAIWQSKRESEALKEIAQAPASAD</sequence>
<feature type="chain" id="PRO_0000217014" description="K(+)-insensitive pyrophosphate-energized proton pump">
    <location>
        <begin position="1"/>
        <end position="775"/>
    </location>
</feature>
<feature type="transmembrane region" description="Helical" evidence="2">
    <location>
        <begin position="9"/>
        <end position="29"/>
    </location>
</feature>
<feature type="transmembrane region" description="Helical" evidence="2">
    <location>
        <begin position="65"/>
        <end position="85"/>
    </location>
</feature>
<feature type="transmembrane region" description="Helical" evidence="2">
    <location>
        <begin position="108"/>
        <end position="128"/>
    </location>
</feature>
<feature type="transmembrane region" description="Helical" evidence="2">
    <location>
        <begin position="160"/>
        <end position="180"/>
    </location>
</feature>
<feature type="transmembrane region" description="Helical" evidence="2">
    <location>
        <begin position="185"/>
        <end position="205"/>
    </location>
</feature>
<feature type="transmembrane region" description="Helical" evidence="2">
    <location>
        <begin position="259"/>
        <end position="279"/>
    </location>
</feature>
<feature type="transmembrane region" description="Helical" evidence="2">
    <location>
        <begin position="288"/>
        <end position="308"/>
    </location>
</feature>
<feature type="transmembrane region" description="Helical" evidence="2">
    <location>
        <begin position="327"/>
        <end position="347"/>
    </location>
</feature>
<feature type="transmembrane region" description="Helical" evidence="2">
    <location>
        <begin position="359"/>
        <end position="379"/>
    </location>
</feature>
<feature type="transmembrane region" description="Helical" evidence="2">
    <location>
        <begin position="413"/>
        <end position="433"/>
    </location>
</feature>
<feature type="transmembrane region" description="Helical" evidence="2">
    <location>
        <begin position="442"/>
        <end position="462"/>
    </location>
</feature>
<feature type="transmembrane region" description="Helical" evidence="2">
    <location>
        <begin position="508"/>
        <end position="528"/>
    </location>
</feature>
<feature type="transmembrane region" description="Helical" evidence="2">
    <location>
        <begin position="555"/>
        <end position="575"/>
    </location>
</feature>
<feature type="transmembrane region" description="Helical" evidence="2">
    <location>
        <begin position="622"/>
        <end position="642"/>
    </location>
</feature>
<feature type="transmembrane region" description="Helical" evidence="2">
    <location>
        <begin position="644"/>
        <end position="664"/>
    </location>
</feature>
<feature type="transmembrane region" description="Helical" evidence="2">
    <location>
        <begin position="710"/>
        <end position="730"/>
    </location>
</feature>
<feature type="transmembrane region" description="Helical" evidence="2">
    <location>
        <begin position="735"/>
        <end position="755"/>
    </location>
</feature>
<feature type="binding site" evidence="1">
    <location>
        <position position="208"/>
    </location>
    <ligand>
        <name>substrate</name>
    </ligand>
</feature>
<feature type="binding site" evidence="1">
    <location>
        <position position="211"/>
    </location>
    <ligand>
        <name>Mg(2+)</name>
        <dbReference type="ChEBI" id="CHEBI:18420"/>
        <label>1</label>
    </ligand>
</feature>
<feature type="binding site" evidence="1">
    <location>
        <position position="215"/>
    </location>
    <ligand>
        <name>Mg(2+)</name>
        <dbReference type="ChEBI" id="CHEBI:18420"/>
        <label>1</label>
    </ligand>
</feature>
<feature type="binding site" evidence="1">
    <location>
        <position position="241"/>
    </location>
    <ligand>
        <name>Mg(2+)</name>
        <dbReference type="ChEBI" id="CHEBI:18420"/>
        <label>2</label>
    </ligand>
</feature>
<feature type="binding site" evidence="1">
    <location>
        <position position="472"/>
    </location>
    <ligand>
        <name>Mg(2+)</name>
        <dbReference type="ChEBI" id="CHEBI:18420"/>
        <label>2</label>
    </ligand>
</feature>
<feature type="binding site" evidence="1">
    <location>
        <position position="671"/>
    </location>
    <ligand>
        <name>Ca(2+)</name>
        <dbReference type="ChEBI" id="CHEBI:29108"/>
    </ligand>
</feature>
<feature type="binding site" evidence="1">
    <location>
        <position position="697"/>
    </location>
    <ligand>
        <name>Ca(2+)</name>
        <dbReference type="ChEBI" id="CHEBI:29108"/>
    </ligand>
</feature>
<feature type="binding site" evidence="1">
    <location>
        <position position="701"/>
    </location>
    <ligand>
        <name>Ca(2+)</name>
        <dbReference type="ChEBI" id="CHEBI:29108"/>
    </ligand>
</feature>
<feature type="binding site" evidence="1">
    <location>
        <position position="704"/>
    </location>
    <ligand>
        <name>substrate</name>
    </ligand>
</feature>
<feature type="site" description="Important for ion transport" evidence="1">
    <location>
        <position position="200"/>
    </location>
</feature>
<feature type="site" description="Important for ion transport" evidence="1">
    <location>
        <position position="245"/>
    </location>
</feature>
<feature type="site" description="Important for ion transport" evidence="1">
    <location>
        <position position="252"/>
    </location>
</feature>
<feature type="site" description="Determinant of potassium independence" evidence="2">
    <location>
        <position position="502"/>
    </location>
</feature>
<feature type="site" description="Important for ion transport" evidence="1">
    <location>
        <position position="705"/>
    </location>
</feature>
<feature type="site" description="Important for ion transport" evidence="1">
    <location>
        <position position="716"/>
    </location>
</feature>
<organism>
    <name type="scientific">Chloroflexus aurantiacus (strain ATCC 29366 / DSM 635 / J-10-fl)</name>
    <dbReference type="NCBI Taxonomy" id="324602"/>
    <lineage>
        <taxon>Bacteria</taxon>
        <taxon>Bacillati</taxon>
        <taxon>Chloroflexota</taxon>
        <taxon>Chloroflexia</taxon>
        <taxon>Chloroflexales</taxon>
        <taxon>Chloroflexineae</taxon>
        <taxon>Chloroflexaceae</taxon>
        <taxon>Chloroflexus</taxon>
    </lineage>
</organism>
<comment type="function">
    <text evidence="2">Proton pump that utilizes the energy of pyrophosphate hydrolysis as the driving force for proton movement across the membrane. Generates a proton motive force.</text>
</comment>
<comment type="catalytic activity">
    <reaction evidence="2">
        <text>diphosphate + H2O + H(+)(in) = 2 phosphate + 2 H(+)(out)</text>
        <dbReference type="Rhea" id="RHEA:13973"/>
        <dbReference type="ChEBI" id="CHEBI:15377"/>
        <dbReference type="ChEBI" id="CHEBI:15378"/>
        <dbReference type="ChEBI" id="CHEBI:33019"/>
        <dbReference type="ChEBI" id="CHEBI:43474"/>
        <dbReference type="EC" id="7.1.3.1"/>
    </reaction>
</comment>
<comment type="cofactor">
    <cofactor evidence="2">
        <name>Mg(2+)</name>
        <dbReference type="ChEBI" id="CHEBI:18420"/>
    </cofactor>
</comment>
<comment type="subunit">
    <text evidence="2">Homodimer.</text>
</comment>
<comment type="subcellular location">
    <subcellularLocation>
        <location evidence="2">Cell membrane</location>
        <topology evidence="2">Multi-pass membrane protein</topology>
    </subcellularLocation>
</comment>
<comment type="similarity">
    <text evidence="2">Belongs to the H(+)-translocating pyrophosphatase (TC 3.A.10) family. K(+)-insensitive subfamily.</text>
</comment>
<reference key="1">
    <citation type="journal article" date="2011" name="BMC Genomics">
        <title>Complete genome sequence of the filamentous anoxygenic phototrophic bacterium Chloroflexus aurantiacus.</title>
        <authorList>
            <person name="Tang K.H."/>
            <person name="Barry K."/>
            <person name="Chertkov O."/>
            <person name="Dalin E."/>
            <person name="Han C.S."/>
            <person name="Hauser L.J."/>
            <person name="Honchak B.M."/>
            <person name="Karbach L.E."/>
            <person name="Land M.L."/>
            <person name="Lapidus A."/>
            <person name="Larimer F.W."/>
            <person name="Mikhailova N."/>
            <person name="Pitluck S."/>
            <person name="Pierson B.K."/>
            <person name="Blankenship R.E."/>
        </authorList>
    </citation>
    <scope>NUCLEOTIDE SEQUENCE [LARGE SCALE GENOMIC DNA]</scope>
    <source>
        <strain>ATCC 29366 / DSM 635 / J-10-fl</strain>
    </source>
</reference>
<reference key="2">
    <citation type="submission" date="1999-12" db="EMBL/GenBank/DDBJ databases">
        <title>Evidence for a wide distribution of proton-translocating pyrophosphatases among photosynthetic organisms.</title>
        <authorList>
            <person name="Perez-Castineira J.R."/>
            <person name="Losada M."/>
            <person name="Serrano A."/>
        </authorList>
    </citation>
    <scope>NUCLEOTIDE SEQUENCE [GENOMIC DNA] OF 474-673</scope>
</reference>
<protein>
    <recommendedName>
        <fullName evidence="2">K(+)-insensitive pyrophosphate-energized proton pump</fullName>
        <ecNumber evidence="2">7.1.3.1</ecNumber>
    </recommendedName>
    <alternativeName>
        <fullName evidence="2">Membrane-bound proton-translocating pyrophosphatase</fullName>
    </alternativeName>
    <alternativeName>
        <fullName evidence="2">Pyrophosphate-energized inorganic pyrophosphatase</fullName>
        <shortName evidence="2">H(+)-PPase</shortName>
    </alternativeName>
</protein>
<accession>Q8VNW3</accession>
<accession>A9W9P8</accession>
<gene>
    <name evidence="2" type="primary">hppA</name>
    <name type="synonym">vppA</name>
    <name type="ordered locus">Caur_1306</name>
</gene>
<proteinExistence type="inferred from homology"/>
<dbReference type="EC" id="7.1.3.1" evidence="2"/>
<dbReference type="EMBL" id="CP000909">
    <property type="protein sequence ID" value="ABY34534.1"/>
    <property type="molecule type" value="Genomic_DNA"/>
</dbReference>
<dbReference type="EMBL" id="AJ251370">
    <property type="protein sequence ID" value="CAC80905.1"/>
    <property type="molecule type" value="Genomic_DNA"/>
</dbReference>
<dbReference type="RefSeq" id="WP_012257190.1">
    <property type="nucleotide sequence ID" value="NC_010175.1"/>
</dbReference>
<dbReference type="RefSeq" id="YP_001634923.1">
    <property type="nucleotide sequence ID" value="NC_010175.1"/>
</dbReference>
<dbReference type="SMR" id="Q8VNW3"/>
<dbReference type="STRING" id="324602.Caur_1306"/>
<dbReference type="EnsemblBacteria" id="ABY34534">
    <property type="protein sequence ID" value="ABY34534"/>
    <property type="gene ID" value="Caur_1306"/>
</dbReference>
<dbReference type="KEGG" id="cau:Caur_1306"/>
<dbReference type="PATRIC" id="fig|324602.8.peg.1495"/>
<dbReference type="eggNOG" id="COG3808">
    <property type="taxonomic scope" value="Bacteria"/>
</dbReference>
<dbReference type="HOGENOM" id="CLU_008743_3_1_0"/>
<dbReference type="InParanoid" id="Q8VNW3"/>
<dbReference type="Proteomes" id="UP000002008">
    <property type="component" value="Chromosome"/>
</dbReference>
<dbReference type="GO" id="GO:0005886">
    <property type="term" value="C:plasma membrane"/>
    <property type="evidence" value="ECO:0007669"/>
    <property type="project" value="UniProtKB-SubCell"/>
</dbReference>
<dbReference type="GO" id="GO:0009678">
    <property type="term" value="F:diphosphate hydrolysis-driven proton transmembrane transporter activity"/>
    <property type="evidence" value="ECO:0007669"/>
    <property type="project" value="UniProtKB-UniRule"/>
</dbReference>
<dbReference type="GO" id="GO:0004427">
    <property type="term" value="F:inorganic diphosphate phosphatase activity"/>
    <property type="evidence" value="ECO:0007669"/>
    <property type="project" value="UniProtKB-UniRule"/>
</dbReference>
<dbReference type="GO" id="GO:0000287">
    <property type="term" value="F:magnesium ion binding"/>
    <property type="evidence" value="ECO:0007669"/>
    <property type="project" value="UniProtKB-UniRule"/>
</dbReference>
<dbReference type="HAMAP" id="MF_01129">
    <property type="entry name" value="PPase_energized_pump"/>
    <property type="match status" value="1"/>
</dbReference>
<dbReference type="InterPro" id="IPR004131">
    <property type="entry name" value="PPase-energised_H-pump"/>
</dbReference>
<dbReference type="NCBIfam" id="NF001952">
    <property type="entry name" value="PRK00733.1-4"/>
    <property type="match status" value="1"/>
</dbReference>
<dbReference type="NCBIfam" id="NF001960">
    <property type="entry name" value="PRK00733.3-5"/>
    <property type="match status" value="1"/>
</dbReference>
<dbReference type="NCBIfam" id="TIGR01104">
    <property type="entry name" value="V_PPase"/>
    <property type="match status" value="1"/>
</dbReference>
<dbReference type="PANTHER" id="PTHR31998">
    <property type="entry name" value="K(+)-INSENSITIVE PYROPHOSPHATE-ENERGIZED PROTON PUMP"/>
    <property type="match status" value="1"/>
</dbReference>
<dbReference type="Pfam" id="PF03030">
    <property type="entry name" value="H_PPase"/>
    <property type="match status" value="1"/>
</dbReference>
<dbReference type="PIRSF" id="PIRSF001265">
    <property type="entry name" value="H+-PPase"/>
    <property type="match status" value="1"/>
</dbReference>
<name>HPPA_CHLAA</name>